<sequence length="79" mass="9010">MSLEDDVIAIIVEQLGVDPKEVNENSSFIEDLNADSLDLTELIMTLEEKFAFEISEEDAEKLRTVGDVFTYIKKRQAEQ</sequence>
<accession>Q9Z8P3</accession>
<gene>
    <name evidence="1" type="primary">acpP</name>
    <name type="ordered locus">CPn_0295</name>
    <name type="ordered locus">CP_0463</name>
    <name type="ordered locus">CpB0304</name>
</gene>
<comment type="function">
    <text evidence="1">Carrier of the growing fatty acid chain in fatty acid biosynthesis.</text>
</comment>
<comment type="pathway">
    <text evidence="1">Lipid metabolism; fatty acid biosynthesis.</text>
</comment>
<comment type="subcellular location">
    <subcellularLocation>
        <location evidence="1">Cytoplasm</location>
    </subcellularLocation>
</comment>
<comment type="PTM">
    <text evidence="1">4'-phosphopantetheine is transferred from CoA to a specific serine of apo-ACP by AcpS. This modification is essential for activity because fatty acids are bound in thioester linkage to the sulfhydryl of the prosthetic group.</text>
</comment>
<comment type="similarity">
    <text evidence="1">Belongs to the acyl carrier protein (ACP) family.</text>
</comment>
<feature type="chain" id="PRO_0000180127" description="Acyl carrier protein">
    <location>
        <begin position="1"/>
        <end position="79"/>
    </location>
</feature>
<feature type="domain" description="Carrier" evidence="2">
    <location>
        <begin position="1"/>
        <end position="76"/>
    </location>
</feature>
<feature type="modified residue" description="O-(pantetheine 4'-phosphoryl)serine" evidence="2">
    <location>
        <position position="36"/>
    </location>
</feature>
<organism>
    <name type="scientific">Chlamydia pneumoniae</name>
    <name type="common">Chlamydophila pneumoniae</name>
    <dbReference type="NCBI Taxonomy" id="83558"/>
    <lineage>
        <taxon>Bacteria</taxon>
        <taxon>Pseudomonadati</taxon>
        <taxon>Chlamydiota</taxon>
        <taxon>Chlamydiia</taxon>
        <taxon>Chlamydiales</taxon>
        <taxon>Chlamydiaceae</taxon>
        <taxon>Chlamydia/Chlamydophila group</taxon>
        <taxon>Chlamydia</taxon>
    </lineage>
</organism>
<reference key="1">
    <citation type="journal article" date="1999" name="Nat. Genet.">
        <title>Comparative genomes of Chlamydia pneumoniae and C. trachomatis.</title>
        <authorList>
            <person name="Kalman S."/>
            <person name="Mitchell W.P."/>
            <person name="Marathe R."/>
            <person name="Lammel C.J."/>
            <person name="Fan J."/>
            <person name="Hyman R.W."/>
            <person name="Olinger L."/>
            <person name="Grimwood J."/>
            <person name="Davis R.W."/>
            <person name="Stephens R.S."/>
        </authorList>
    </citation>
    <scope>NUCLEOTIDE SEQUENCE [LARGE SCALE GENOMIC DNA]</scope>
    <source>
        <strain>CWL029</strain>
    </source>
</reference>
<reference key="2">
    <citation type="journal article" date="2000" name="Nucleic Acids Res.">
        <title>Genome sequences of Chlamydia trachomatis MoPn and Chlamydia pneumoniae AR39.</title>
        <authorList>
            <person name="Read T.D."/>
            <person name="Brunham R.C."/>
            <person name="Shen C."/>
            <person name="Gill S.R."/>
            <person name="Heidelberg J.F."/>
            <person name="White O."/>
            <person name="Hickey E.K."/>
            <person name="Peterson J.D."/>
            <person name="Utterback T.R."/>
            <person name="Berry K.J."/>
            <person name="Bass S."/>
            <person name="Linher K.D."/>
            <person name="Weidman J.F."/>
            <person name="Khouri H.M."/>
            <person name="Craven B."/>
            <person name="Bowman C."/>
            <person name="Dodson R.J."/>
            <person name="Gwinn M.L."/>
            <person name="Nelson W.C."/>
            <person name="DeBoy R.T."/>
            <person name="Kolonay J.F."/>
            <person name="McClarty G."/>
            <person name="Salzberg S.L."/>
            <person name="Eisen J.A."/>
            <person name="Fraser C.M."/>
        </authorList>
    </citation>
    <scope>NUCLEOTIDE SEQUENCE [LARGE SCALE GENOMIC DNA]</scope>
    <source>
        <strain>AR39</strain>
    </source>
</reference>
<reference key="3">
    <citation type="journal article" date="2000" name="Nucleic Acids Res.">
        <title>Comparison of whole genome sequences of Chlamydia pneumoniae J138 from Japan and CWL029 from USA.</title>
        <authorList>
            <person name="Shirai M."/>
            <person name="Hirakawa H."/>
            <person name="Kimoto M."/>
            <person name="Tabuchi M."/>
            <person name="Kishi F."/>
            <person name="Ouchi K."/>
            <person name="Shiba T."/>
            <person name="Ishii K."/>
            <person name="Hattori M."/>
            <person name="Kuhara S."/>
            <person name="Nakazawa T."/>
        </authorList>
    </citation>
    <scope>NUCLEOTIDE SEQUENCE [LARGE SCALE GENOMIC DNA]</scope>
    <source>
        <strain>J138</strain>
    </source>
</reference>
<reference key="4">
    <citation type="submission" date="2002-05" db="EMBL/GenBank/DDBJ databases">
        <title>The genome sequence of Chlamydia pneumoniae TW183 and comparison with other Chlamydia strains based on whole genome sequence analysis.</title>
        <authorList>
            <person name="Geng M.M."/>
            <person name="Schuhmacher A."/>
            <person name="Muehldorfer I."/>
            <person name="Bensch K.W."/>
            <person name="Schaefer K.P."/>
            <person name="Schneider S."/>
            <person name="Pohl T."/>
            <person name="Essig A."/>
            <person name="Marre R."/>
            <person name="Melchers K."/>
        </authorList>
    </citation>
    <scope>NUCLEOTIDE SEQUENCE [LARGE SCALE GENOMIC DNA]</scope>
    <source>
        <strain>TW-183</strain>
    </source>
</reference>
<protein>
    <recommendedName>
        <fullName evidence="1">Acyl carrier protein</fullName>
        <shortName evidence="1">ACP</shortName>
    </recommendedName>
</protein>
<dbReference type="EMBL" id="AE001363">
    <property type="protein sequence ID" value="AAD18444.1"/>
    <property type="molecule type" value="Genomic_DNA"/>
</dbReference>
<dbReference type="EMBL" id="AE002161">
    <property type="protein sequence ID" value="AAF38300.1"/>
    <property type="molecule type" value="Genomic_DNA"/>
</dbReference>
<dbReference type="EMBL" id="BA000008">
    <property type="protein sequence ID" value="BAA98505.1"/>
    <property type="molecule type" value="Genomic_DNA"/>
</dbReference>
<dbReference type="EMBL" id="AE009440">
    <property type="protein sequence ID" value="AAP98237.1"/>
    <property type="molecule type" value="Genomic_DNA"/>
</dbReference>
<dbReference type="PIR" id="C72096">
    <property type="entry name" value="C72096"/>
</dbReference>
<dbReference type="PIR" id="G86527">
    <property type="entry name" value="G86527"/>
</dbReference>
<dbReference type="RefSeq" id="NP_224500.1">
    <property type="nucleotide sequence ID" value="NC_000922.1"/>
</dbReference>
<dbReference type="RefSeq" id="WP_010882943.1">
    <property type="nucleotide sequence ID" value="NZ_LN847257.1"/>
</dbReference>
<dbReference type="SMR" id="Q9Z8P3"/>
<dbReference type="STRING" id="406984.CPK_ORF00803"/>
<dbReference type="GeneID" id="45050344"/>
<dbReference type="KEGG" id="cpa:CP_0463"/>
<dbReference type="KEGG" id="cpj:acpP"/>
<dbReference type="KEGG" id="cpn:CPn_0295"/>
<dbReference type="KEGG" id="cpt:CpB0304"/>
<dbReference type="PATRIC" id="fig|115713.3.peg.329"/>
<dbReference type="eggNOG" id="COG0236">
    <property type="taxonomic scope" value="Bacteria"/>
</dbReference>
<dbReference type="HOGENOM" id="CLU_108696_5_1_0"/>
<dbReference type="OMA" id="TMEASFI"/>
<dbReference type="OrthoDB" id="9804551at2"/>
<dbReference type="UniPathway" id="UPA00094"/>
<dbReference type="Proteomes" id="UP000000583">
    <property type="component" value="Chromosome"/>
</dbReference>
<dbReference type="Proteomes" id="UP000000801">
    <property type="component" value="Chromosome"/>
</dbReference>
<dbReference type="GO" id="GO:0005829">
    <property type="term" value="C:cytosol"/>
    <property type="evidence" value="ECO:0007669"/>
    <property type="project" value="TreeGrafter"/>
</dbReference>
<dbReference type="GO" id="GO:0016020">
    <property type="term" value="C:membrane"/>
    <property type="evidence" value="ECO:0007669"/>
    <property type="project" value="GOC"/>
</dbReference>
<dbReference type="GO" id="GO:0000035">
    <property type="term" value="F:acyl binding"/>
    <property type="evidence" value="ECO:0007669"/>
    <property type="project" value="TreeGrafter"/>
</dbReference>
<dbReference type="GO" id="GO:0000036">
    <property type="term" value="F:acyl carrier activity"/>
    <property type="evidence" value="ECO:0007669"/>
    <property type="project" value="UniProtKB-UniRule"/>
</dbReference>
<dbReference type="GO" id="GO:0009245">
    <property type="term" value="P:lipid A biosynthetic process"/>
    <property type="evidence" value="ECO:0007669"/>
    <property type="project" value="TreeGrafter"/>
</dbReference>
<dbReference type="Gene3D" id="1.10.1200.10">
    <property type="entry name" value="ACP-like"/>
    <property type="match status" value="1"/>
</dbReference>
<dbReference type="HAMAP" id="MF_01217">
    <property type="entry name" value="Acyl_carrier"/>
    <property type="match status" value="1"/>
</dbReference>
<dbReference type="InterPro" id="IPR003231">
    <property type="entry name" value="ACP"/>
</dbReference>
<dbReference type="InterPro" id="IPR036736">
    <property type="entry name" value="ACP-like_sf"/>
</dbReference>
<dbReference type="InterPro" id="IPR009081">
    <property type="entry name" value="PP-bd_ACP"/>
</dbReference>
<dbReference type="InterPro" id="IPR006162">
    <property type="entry name" value="Ppantetheine_attach_site"/>
</dbReference>
<dbReference type="NCBIfam" id="TIGR00517">
    <property type="entry name" value="acyl_carrier"/>
    <property type="match status" value="1"/>
</dbReference>
<dbReference type="NCBIfam" id="NF002148">
    <property type="entry name" value="PRK00982.1-2"/>
    <property type="match status" value="1"/>
</dbReference>
<dbReference type="NCBIfam" id="NF002150">
    <property type="entry name" value="PRK00982.1-4"/>
    <property type="match status" value="1"/>
</dbReference>
<dbReference type="PANTHER" id="PTHR20863">
    <property type="entry name" value="ACYL CARRIER PROTEIN"/>
    <property type="match status" value="1"/>
</dbReference>
<dbReference type="PANTHER" id="PTHR20863:SF76">
    <property type="entry name" value="CARRIER DOMAIN-CONTAINING PROTEIN"/>
    <property type="match status" value="1"/>
</dbReference>
<dbReference type="Pfam" id="PF00550">
    <property type="entry name" value="PP-binding"/>
    <property type="match status" value="1"/>
</dbReference>
<dbReference type="SUPFAM" id="SSF47336">
    <property type="entry name" value="ACP-like"/>
    <property type="match status" value="1"/>
</dbReference>
<dbReference type="PROSITE" id="PS50075">
    <property type="entry name" value="CARRIER"/>
    <property type="match status" value="1"/>
</dbReference>
<dbReference type="PROSITE" id="PS00012">
    <property type="entry name" value="PHOSPHOPANTETHEINE"/>
    <property type="match status" value="1"/>
</dbReference>
<proteinExistence type="inferred from homology"/>
<evidence type="ECO:0000255" key="1">
    <source>
        <dbReference type="HAMAP-Rule" id="MF_01217"/>
    </source>
</evidence>
<evidence type="ECO:0000255" key="2">
    <source>
        <dbReference type="PROSITE-ProRule" id="PRU00258"/>
    </source>
</evidence>
<keyword id="KW-0963">Cytoplasm</keyword>
<keyword id="KW-0275">Fatty acid biosynthesis</keyword>
<keyword id="KW-0276">Fatty acid metabolism</keyword>
<keyword id="KW-0444">Lipid biosynthesis</keyword>
<keyword id="KW-0443">Lipid metabolism</keyword>
<keyword id="KW-0596">Phosphopantetheine</keyword>
<keyword id="KW-0597">Phosphoprotein</keyword>
<name>ACP_CHLPN</name>